<gene>
    <name evidence="1" type="primary">upp</name>
    <name type="ordered locus">SARI_00382</name>
</gene>
<feature type="chain" id="PRO_1000085635" description="Uracil phosphoribosyltransferase">
    <location>
        <begin position="1"/>
        <end position="208"/>
    </location>
</feature>
<feature type="binding site" evidence="1">
    <location>
        <position position="78"/>
    </location>
    <ligand>
        <name>5-phospho-alpha-D-ribose 1-diphosphate</name>
        <dbReference type="ChEBI" id="CHEBI:58017"/>
    </ligand>
</feature>
<feature type="binding site" evidence="1">
    <location>
        <position position="103"/>
    </location>
    <ligand>
        <name>5-phospho-alpha-D-ribose 1-diphosphate</name>
        <dbReference type="ChEBI" id="CHEBI:58017"/>
    </ligand>
</feature>
<feature type="binding site" evidence="1">
    <location>
        <begin position="130"/>
        <end position="138"/>
    </location>
    <ligand>
        <name>5-phospho-alpha-D-ribose 1-diphosphate</name>
        <dbReference type="ChEBI" id="CHEBI:58017"/>
    </ligand>
</feature>
<feature type="binding site" evidence="1">
    <location>
        <position position="193"/>
    </location>
    <ligand>
        <name>uracil</name>
        <dbReference type="ChEBI" id="CHEBI:17568"/>
    </ligand>
</feature>
<feature type="binding site" evidence="1">
    <location>
        <begin position="198"/>
        <end position="200"/>
    </location>
    <ligand>
        <name>uracil</name>
        <dbReference type="ChEBI" id="CHEBI:17568"/>
    </ligand>
</feature>
<feature type="binding site" evidence="1">
    <location>
        <position position="199"/>
    </location>
    <ligand>
        <name>5-phospho-alpha-D-ribose 1-diphosphate</name>
        <dbReference type="ChEBI" id="CHEBI:58017"/>
    </ligand>
</feature>
<accession>A9MHP1</accession>
<proteinExistence type="inferred from homology"/>
<keyword id="KW-0021">Allosteric enzyme</keyword>
<keyword id="KW-0328">Glycosyltransferase</keyword>
<keyword id="KW-0342">GTP-binding</keyword>
<keyword id="KW-0460">Magnesium</keyword>
<keyword id="KW-0547">Nucleotide-binding</keyword>
<keyword id="KW-1185">Reference proteome</keyword>
<keyword id="KW-0808">Transferase</keyword>
<organism>
    <name type="scientific">Salmonella arizonae (strain ATCC BAA-731 / CDC346-86 / RSK2980)</name>
    <dbReference type="NCBI Taxonomy" id="41514"/>
    <lineage>
        <taxon>Bacteria</taxon>
        <taxon>Pseudomonadati</taxon>
        <taxon>Pseudomonadota</taxon>
        <taxon>Gammaproteobacteria</taxon>
        <taxon>Enterobacterales</taxon>
        <taxon>Enterobacteriaceae</taxon>
        <taxon>Salmonella</taxon>
    </lineage>
</organism>
<name>UPP_SALAR</name>
<dbReference type="EC" id="2.4.2.9" evidence="1"/>
<dbReference type="EMBL" id="CP000880">
    <property type="protein sequence ID" value="ABX20319.1"/>
    <property type="molecule type" value="Genomic_DNA"/>
</dbReference>
<dbReference type="SMR" id="A9MHP1"/>
<dbReference type="STRING" id="41514.SARI_00382"/>
<dbReference type="KEGG" id="ses:SARI_00382"/>
<dbReference type="HOGENOM" id="CLU_067096_2_2_6"/>
<dbReference type="UniPathway" id="UPA00574">
    <property type="reaction ID" value="UER00636"/>
</dbReference>
<dbReference type="Proteomes" id="UP000002084">
    <property type="component" value="Chromosome"/>
</dbReference>
<dbReference type="GO" id="GO:0005525">
    <property type="term" value="F:GTP binding"/>
    <property type="evidence" value="ECO:0007669"/>
    <property type="project" value="UniProtKB-KW"/>
</dbReference>
<dbReference type="GO" id="GO:0000287">
    <property type="term" value="F:magnesium ion binding"/>
    <property type="evidence" value="ECO:0007669"/>
    <property type="project" value="UniProtKB-UniRule"/>
</dbReference>
<dbReference type="GO" id="GO:0004845">
    <property type="term" value="F:uracil phosphoribosyltransferase activity"/>
    <property type="evidence" value="ECO:0007669"/>
    <property type="project" value="UniProtKB-UniRule"/>
</dbReference>
<dbReference type="GO" id="GO:0044206">
    <property type="term" value="P:UMP salvage"/>
    <property type="evidence" value="ECO:0007669"/>
    <property type="project" value="UniProtKB-UniRule"/>
</dbReference>
<dbReference type="GO" id="GO:0006223">
    <property type="term" value="P:uracil salvage"/>
    <property type="evidence" value="ECO:0007669"/>
    <property type="project" value="InterPro"/>
</dbReference>
<dbReference type="CDD" id="cd06223">
    <property type="entry name" value="PRTases_typeI"/>
    <property type="match status" value="1"/>
</dbReference>
<dbReference type="FunFam" id="3.40.50.2020:FF:000003">
    <property type="entry name" value="Uracil phosphoribosyltransferase"/>
    <property type="match status" value="1"/>
</dbReference>
<dbReference type="Gene3D" id="3.40.50.2020">
    <property type="match status" value="1"/>
</dbReference>
<dbReference type="HAMAP" id="MF_01218_B">
    <property type="entry name" value="Upp_B"/>
    <property type="match status" value="1"/>
</dbReference>
<dbReference type="InterPro" id="IPR000836">
    <property type="entry name" value="PRibTrfase_dom"/>
</dbReference>
<dbReference type="InterPro" id="IPR029057">
    <property type="entry name" value="PRTase-like"/>
</dbReference>
<dbReference type="InterPro" id="IPR034332">
    <property type="entry name" value="Upp_B"/>
</dbReference>
<dbReference type="InterPro" id="IPR050054">
    <property type="entry name" value="UPRTase/APRTase"/>
</dbReference>
<dbReference type="InterPro" id="IPR005765">
    <property type="entry name" value="Ura_phspho_trans"/>
</dbReference>
<dbReference type="NCBIfam" id="NF001097">
    <property type="entry name" value="PRK00129.1"/>
    <property type="match status" value="1"/>
</dbReference>
<dbReference type="NCBIfam" id="TIGR01091">
    <property type="entry name" value="upp"/>
    <property type="match status" value="1"/>
</dbReference>
<dbReference type="PANTHER" id="PTHR32315">
    <property type="entry name" value="ADENINE PHOSPHORIBOSYLTRANSFERASE"/>
    <property type="match status" value="1"/>
</dbReference>
<dbReference type="PANTHER" id="PTHR32315:SF4">
    <property type="entry name" value="URACIL PHOSPHORIBOSYLTRANSFERASE, CHLOROPLASTIC"/>
    <property type="match status" value="1"/>
</dbReference>
<dbReference type="Pfam" id="PF14681">
    <property type="entry name" value="UPRTase"/>
    <property type="match status" value="1"/>
</dbReference>
<dbReference type="SUPFAM" id="SSF53271">
    <property type="entry name" value="PRTase-like"/>
    <property type="match status" value="1"/>
</dbReference>
<evidence type="ECO:0000255" key="1">
    <source>
        <dbReference type="HAMAP-Rule" id="MF_01218"/>
    </source>
</evidence>
<protein>
    <recommendedName>
        <fullName evidence="1">Uracil phosphoribosyltransferase</fullName>
        <ecNumber evidence="1">2.4.2.9</ecNumber>
    </recommendedName>
    <alternativeName>
        <fullName evidence="1">UMP pyrophosphorylase</fullName>
    </alternativeName>
    <alternativeName>
        <fullName evidence="1">UPRTase</fullName>
    </alternativeName>
</protein>
<sequence length="208" mass="22533">MKIVEVKHPLVKHKLGLMRENDISTKRFRELASEVGSLLTYEATADLETEKVTIEGWNGPVEIDQIKGKKITVVPILRAGLGMMEGVLENVPSARISVVGMYRNEETLEPVPYFQKLVSNIDERMALIVDPMLATGGSVIATIDLLKKAGCSSIKVLVLVAAPEGIAALEKAHPDVELYTASIDQGLNEHGYIIPGLGDAGDKIFGTK</sequence>
<comment type="function">
    <text evidence="1">Catalyzes the conversion of uracil and 5-phospho-alpha-D-ribose 1-diphosphate (PRPP) to UMP and diphosphate.</text>
</comment>
<comment type="catalytic activity">
    <reaction evidence="1">
        <text>UMP + diphosphate = 5-phospho-alpha-D-ribose 1-diphosphate + uracil</text>
        <dbReference type="Rhea" id="RHEA:13017"/>
        <dbReference type="ChEBI" id="CHEBI:17568"/>
        <dbReference type="ChEBI" id="CHEBI:33019"/>
        <dbReference type="ChEBI" id="CHEBI:57865"/>
        <dbReference type="ChEBI" id="CHEBI:58017"/>
        <dbReference type="EC" id="2.4.2.9"/>
    </reaction>
</comment>
<comment type="cofactor">
    <cofactor evidence="1">
        <name>Mg(2+)</name>
        <dbReference type="ChEBI" id="CHEBI:18420"/>
    </cofactor>
    <text evidence="1">Binds 1 Mg(2+) ion per subunit. The magnesium is bound as Mg-PRPP.</text>
</comment>
<comment type="activity regulation">
    <text evidence="1">Allosterically activated by GTP.</text>
</comment>
<comment type="pathway">
    <text evidence="1">Pyrimidine metabolism; UMP biosynthesis via salvage pathway; UMP from uracil: step 1/1.</text>
</comment>
<comment type="similarity">
    <text evidence="1">Belongs to the UPRTase family.</text>
</comment>
<reference key="1">
    <citation type="submission" date="2007-11" db="EMBL/GenBank/DDBJ databases">
        <authorList>
            <consortium name="The Salmonella enterica serovar Arizonae Genome Sequencing Project"/>
            <person name="McClelland M."/>
            <person name="Sanderson E.K."/>
            <person name="Porwollik S."/>
            <person name="Spieth J."/>
            <person name="Clifton W.S."/>
            <person name="Fulton R."/>
            <person name="Chunyan W."/>
            <person name="Wollam A."/>
            <person name="Shah N."/>
            <person name="Pepin K."/>
            <person name="Bhonagiri V."/>
            <person name="Nash W."/>
            <person name="Johnson M."/>
            <person name="Thiruvilangam P."/>
            <person name="Wilson R."/>
        </authorList>
    </citation>
    <scope>NUCLEOTIDE SEQUENCE [LARGE SCALE GENOMIC DNA]</scope>
    <source>
        <strain>ATCC BAA-731 / CDC346-86 / RSK2980</strain>
    </source>
</reference>